<gene>
    <name evidence="1" type="primary">miaA</name>
    <name type="ordered locus">Dshi_1492</name>
</gene>
<accession>A8LK35</accession>
<dbReference type="EC" id="2.5.1.75" evidence="1"/>
<dbReference type="EMBL" id="CP000830">
    <property type="protein sequence ID" value="ABV93234.1"/>
    <property type="molecule type" value="Genomic_DNA"/>
</dbReference>
<dbReference type="RefSeq" id="WP_012178164.1">
    <property type="nucleotide sequence ID" value="NC_009952.1"/>
</dbReference>
<dbReference type="SMR" id="A8LK35"/>
<dbReference type="STRING" id="398580.Dshi_1492"/>
<dbReference type="KEGG" id="dsh:Dshi_1492"/>
<dbReference type="eggNOG" id="COG0324">
    <property type="taxonomic scope" value="Bacteria"/>
</dbReference>
<dbReference type="HOGENOM" id="CLU_032616_0_1_5"/>
<dbReference type="OrthoDB" id="9776390at2"/>
<dbReference type="Proteomes" id="UP000006833">
    <property type="component" value="Chromosome"/>
</dbReference>
<dbReference type="GO" id="GO:0005524">
    <property type="term" value="F:ATP binding"/>
    <property type="evidence" value="ECO:0007669"/>
    <property type="project" value="UniProtKB-UniRule"/>
</dbReference>
<dbReference type="GO" id="GO:0052381">
    <property type="term" value="F:tRNA dimethylallyltransferase activity"/>
    <property type="evidence" value="ECO:0007669"/>
    <property type="project" value="UniProtKB-UniRule"/>
</dbReference>
<dbReference type="GO" id="GO:0006400">
    <property type="term" value="P:tRNA modification"/>
    <property type="evidence" value="ECO:0007669"/>
    <property type="project" value="TreeGrafter"/>
</dbReference>
<dbReference type="CDD" id="cd02019">
    <property type="entry name" value="NK"/>
    <property type="match status" value="1"/>
</dbReference>
<dbReference type="Gene3D" id="1.10.20.140">
    <property type="match status" value="1"/>
</dbReference>
<dbReference type="Gene3D" id="3.40.50.300">
    <property type="entry name" value="P-loop containing nucleotide triphosphate hydrolases"/>
    <property type="match status" value="1"/>
</dbReference>
<dbReference type="HAMAP" id="MF_00185">
    <property type="entry name" value="IPP_trans"/>
    <property type="match status" value="1"/>
</dbReference>
<dbReference type="InterPro" id="IPR039657">
    <property type="entry name" value="Dimethylallyltransferase"/>
</dbReference>
<dbReference type="InterPro" id="IPR018022">
    <property type="entry name" value="IPT"/>
</dbReference>
<dbReference type="InterPro" id="IPR027417">
    <property type="entry name" value="P-loop_NTPase"/>
</dbReference>
<dbReference type="NCBIfam" id="TIGR00174">
    <property type="entry name" value="miaA"/>
    <property type="match status" value="1"/>
</dbReference>
<dbReference type="PANTHER" id="PTHR11088">
    <property type="entry name" value="TRNA DIMETHYLALLYLTRANSFERASE"/>
    <property type="match status" value="1"/>
</dbReference>
<dbReference type="PANTHER" id="PTHR11088:SF60">
    <property type="entry name" value="TRNA DIMETHYLALLYLTRANSFERASE"/>
    <property type="match status" value="1"/>
</dbReference>
<dbReference type="Pfam" id="PF01715">
    <property type="entry name" value="IPPT"/>
    <property type="match status" value="1"/>
</dbReference>
<dbReference type="SUPFAM" id="SSF52540">
    <property type="entry name" value="P-loop containing nucleoside triphosphate hydrolases"/>
    <property type="match status" value="2"/>
</dbReference>
<organism>
    <name type="scientific">Dinoroseobacter shibae (strain DSM 16493 / NCIMB 14021 / DFL 12)</name>
    <dbReference type="NCBI Taxonomy" id="398580"/>
    <lineage>
        <taxon>Bacteria</taxon>
        <taxon>Pseudomonadati</taxon>
        <taxon>Pseudomonadota</taxon>
        <taxon>Alphaproteobacteria</taxon>
        <taxon>Rhodobacterales</taxon>
        <taxon>Roseobacteraceae</taxon>
        <taxon>Dinoroseobacter</taxon>
    </lineage>
</organism>
<name>MIAA_DINSH</name>
<proteinExistence type="inferred from homology"/>
<protein>
    <recommendedName>
        <fullName evidence="1">tRNA dimethylallyltransferase</fullName>
        <ecNumber evidence="1">2.5.1.75</ecNumber>
    </recommendedName>
    <alternativeName>
        <fullName evidence="1">Dimethylallyl diphosphate:tRNA dimethylallyltransferase</fullName>
        <shortName evidence="1">DMAPP:tRNA dimethylallyltransferase</shortName>
        <shortName evidence="1">DMATase</shortName>
    </alternativeName>
    <alternativeName>
        <fullName evidence="1">Isopentenyl-diphosphate:tRNA isopentenyltransferase</fullName>
        <shortName evidence="1">IPP transferase</shortName>
        <shortName evidence="1">IPPT</shortName>
        <shortName evidence="1">IPTase</shortName>
    </alternativeName>
</protein>
<sequence length="296" mass="32546">MPLPDLSTLSADQPVLIAGPTASGKSALALRIAERQGGVIVNADALQVHHAWRVLTARPSPQDEARAPHRLYGHVARGTPHSVGHWLREVTPLLSGQRPIIVGGTGLFFTALTQGLSEIPEVPAEVRARADALREGDFARMQADLGARDPETSARIDMANPMRVQRAWEVLETTGRPLARWQADTPPPLLPRSRAARFVLEAPKDWLAPRIARRFRQMLDQGALDEARAALPHWDAAAPWARAIGAPELIAHLRGEITLDAAEEAATRATRQYAKRQRTWFRARMRDWTPVPPGSA</sequence>
<feature type="chain" id="PRO_1000118523" description="tRNA dimethylallyltransferase">
    <location>
        <begin position="1"/>
        <end position="296"/>
    </location>
</feature>
<feature type="binding site" evidence="1">
    <location>
        <begin position="19"/>
        <end position="26"/>
    </location>
    <ligand>
        <name>ATP</name>
        <dbReference type="ChEBI" id="CHEBI:30616"/>
    </ligand>
</feature>
<feature type="binding site" evidence="1">
    <location>
        <begin position="21"/>
        <end position="26"/>
    </location>
    <ligand>
        <name>substrate</name>
    </ligand>
</feature>
<feature type="site" description="Interaction with substrate tRNA" evidence="1">
    <location>
        <position position="105"/>
    </location>
</feature>
<feature type="site" description="Interaction with substrate tRNA" evidence="1">
    <location>
        <position position="127"/>
    </location>
</feature>
<keyword id="KW-0067">ATP-binding</keyword>
<keyword id="KW-0460">Magnesium</keyword>
<keyword id="KW-0547">Nucleotide-binding</keyword>
<keyword id="KW-1185">Reference proteome</keyword>
<keyword id="KW-0808">Transferase</keyword>
<keyword id="KW-0819">tRNA processing</keyword>
<evidence type="ECO:0000255" key="1">
    <source>
        <dbReference type="HAMAP-Rule" id="MF_00185"/>
    </source>
</evidence>
<comment type="function">
    <text evidence="1">Catalyzes the transfer of a dimethylallyl group onto the adenine at position 37 in tRNAs that read codons beginning with uridine, leading to the formation of N6-(dimethylallyl)adenosine (i(6)A).</text>
</comment>
<comment type="catalytic activity">
    <reaction evidence="1">
        <text>adenosine(37) in tRNA + dimethylallyl diphosphate = N(6)-dimethylallyladenosine(37) in tRNA + diphosphate</text>
        <dbReference type="Rhea" id="RHEA:26482"/>
        <dbReference type="Rhea" id="RHEA-COMP:10162"/>
        <dbReference type="Rhea" id="RHEA-COMP:10375"/>
        <dbReference type="ChEBI" id="CHEBI:33019"/>
        <dbReference type="ChEBI" id="CHEBI:57623"/>
        <dbReference type="ChEBI" id="CHEBI:74411"/>
        <dbReference type="ChEBI" id="CHEBI:74415"/>
        <dbReference type="EC" id="2.5.1.75"/>
    </reaction>
</comment>
<comment type="cofactor">
    <cofactor evidence="1">
        <name>Mg(2+)</name>
        <dbReference type="ChEBI" id="CHEBI:18420"/>
    </cofactor>
</comment>
<comment type="subunit">
    <text evidence="1">Monomer.</text>
</comment>
<comment type="similarity">
    <text evidence="1">Belongs to the IPP transferase family.</text>
</comment>
<reference key="1">
    <citation type="journal article" date="2010" name="ISME J.">
        <title>The complete genome sequence of the algal symbiont Dinoroseobacter shibae: a hitchhiker's guide to life in the sea.</title>
        <authorList>
            <person name="Wagner-Dobler I."/>
            <person name="Ballhausen B."/>
            <person name="Berger M."/>
            <person name="Brinkhoff T."/>
            <person name="Buchholz I."/>
            <person name="Bunk B."/>
            <person name="Cypionka H."/>
            <person name="Daniel R."/>
            <person name="Drepper T."/>
            <person name="Gerdts G."/>
            <person name="Hahnke S."/>
            <person name="Han C."/>
            <person name="Jahn D."/>
            <person name="Kalhoefer D."/>
            <person name="Kiss H."/>
            <person name="Klenk H.P."/>
            <person name="Kyrpides N."/>
            <person name="Liebl W."/>
            <person name="Liesegang H."/>
            <person name="Meincke L."/>
            <person name="Pati A."/>
            <person name="Petersen J."/>
            <person name="Piekarski T."/>
            <person name="Pommerenke C."/>
            <person name="Pradella S."/>
            <person name="Pukall R."/>
            <person name="Rabus R."/>
            <person name="Stackebrandt E."/>
            <person name="Thole S."/>
            <person name="Thompson L."/>
            <person name="Tielen P."/>
            <person name="Tomasch J."/>
            <person name="von Jan M."/>
            <person name="Wanphrut N."/>
            <person name="Wichels A."/>
            <person name="Zech H."/>
            <person name="Simon M."/>
        </authorList>
    </citation>
    <scope>NUCLEOTIDE SEQUENCE [LARGE SCALE GENOMIC DNA]</scope>
    <source>
        <strain>DSM 16493 / NCIMB 14021 / DFL 12</strain>
    </source>
</reference>